<dbReference type="EMBL" id="M96571">
    <property type="protein sequence ID" value="AAA16236.1"/>
    <property type="molecule type" value="Unassigned_DNA"/>
</dbReference>
<dbReference type="EMBL" id="U40829">
    <property type="protein sequence ID" value="AAB68273.1"/>
    <property type="molecule type" value="Genomic_DNA"/>
</dbReference>
<dbReference type="EMBL" id="BK006949">
    <property type="protein sequence ID" value="DAA11544.1"/>
    <property type="molecule type" value="Genomic_DNA"/>
</dbReference>
<dbReference type="PIR" id="A46703">
    <property type="entry name" value="A46703"/>
</dbReference>
<dbReference type="RefSeq" id="NP_015457.1">
    <property type="nucleotide sequence ID" value="NM_001184229.1"/>
</dbReference>
<dbReference type="SMR" id="P0CX30"/>
<dbReference type="BioGRID" id="33363">
    <property type="interactions" value="283"/>
</dbReference>
<dbReference type="BioGRID" id="36298">
    <property type="interactions" value="94"/>
</dbReference>
<dbReference type="ComplexPortal" id="CPX-1599">
    <property type="entry name" value="40S cytosolic small ribosomal subunit"/>
</dbReference>
<dbReference type="FunCoup" id="P0CX30">
    <property type="interactions" value="973"/>
</dbReference>
<dbReference type="IntAct" id="P0CX30">
    <property type="interactions" value="13"/>
</dbReference>
<dbReference type="MINT" id="P0CX30"/>
<dbReference type="iPTMnet" id="P0CX30"/>
<dbReference type="EnsemblFungi" id="YGR118W_mRNA">
    <property type="protein sequence ID" value="YGR118W"/>
    <property type="gene ID" value="YGR118W"/>
</dbReference>
<dbReference type="EnsemblFungi" id="YPR132W_mRNA">
    <property type="protein sequence ID" value="YPR132W"/>
    <property type="gene ID" value="YPR132W"/>
</dbReference>
<dbReference type="GeneID" id="856250"/>
<dbReference type="KEGG" id="sce:YGR118W"/>
<dbReference type="KEGG" id="sce:YPR132W"/>
<dbReference type="AGR" id="SGD:S000006336"/>
<dbReference type="SGD" id="S000006336">
    <property type="gene designation" value="RPS23B"/>
</dbReference>
<dbReference type="VEuPathDB" id="FungiDB:YGR118W"/>
<dbReference type="VEuPathDB" id="FungiDB:YPR132W"/>
<dbReference type="GeneTree" id="ENSGT00550000074784"/>
<dbReference type="HOGENOM" id="CLU_115574_0_1_1"/>
<dbReference type="InParanoid" id="P0CX30"/>
<dbReference type="OMA" id="KFRWSQR"/>
<dbReference type="OrthoDB" id="1713912at2759"/>
<dbReference type="BioCyc" id="YEAST:G3O-34268-MONOMER"/>
<dbReference type="Reactome" id="R-SCE-156827">
    <property type="pathway name" value="L13a-mediated translational silencing of Ceruloplasmin expression"/>
</dbReference>
<dbReference type="Reactome" id="R-SCE-1799339">
    <property type="pathway name" value="SRP-dependent cotranslational protein targeting to membrane"/>
</dbReference>
<dbReference type="Reactome" id="R-SCE-72649">
    <property type="pathway name" value="Translation initiation complex formation"/>
</dbReference>
<dbReference type="Reactome" id="R-SCE-72689">
    <property type="pathway name" value="Formation of a pool of free 40S subunits"/>
</dbReference>
<dbReference type="Reactome" id="R-SCE-72695">
    <property type="pathway name" value="Formation of the ternary complex, and subsequently, the 43S complex"/>
</dbReference>
<dbReference type="Reactome" id="R-SCE-72702">
    <property type="pathway name" value="Ribosomal scanning and start codon recognition"/>
</dbReference>
<dbReference type="Reactome" id="R-SCE-72706">
    <property type="pathway name" value="GTP hydrolysis and joining of the 60S ribosomal subunit"/>
</dbReference>
<dbReference type="Reactome" id="R-SCE-9629569">
    <property type="pathway name" value="Protein hydroxylation"/>
</dbReference>
<dbReference type="Reactome" id="R-SCE-975956">
    <property type="pathway name" value="Nonsense Mediated Decay (NMD) independent of the Exon Junction Complex (EJC)"/>
</dbReference>
<dbReference type="Reactome" id="R-SCE-975957">
    <property type="pathway name" value="Nonsense Mediated Decay (NMD) enhanced by the Exon Junction Complex (EJC)"/>
</dbReference>
<dbReference type="BioGRID-ORCS" id="853015">
    <property type="hits" value="5 hits in 10 CRISPR screens"/>
</dbReference>
<dbReference type="BioGRID-ORCS" id="856250">
    <property type="hits" value="1 hit in 10 CRISPR screens"/>
</dbReference>
<dbReference type="PRO" id="PR:P0CX30"/>
<dbReference type="Proteomes" id="UP000002311">
    <property type="component" value="Chromosome XVI"/>
</dbReference>
<dbReference type="RNAct" id="P0CX30">
    <property type="molecule type" value="protein"/>
</dbReference>
<dbReference type="ExpressionAtlas" id="P0CX30">
    <property type="expression patterns" value="baseline and differential"/>
</dbReference>
<dbReference type="GO" id="GO:0005829">
    <property type="term" value="C:cytosol"/>
    <property type="evidence" value="ECO:0000304"/>
    <property type="project" value="Reactome"/>
</dbReference>
<dbReference type="GO" id="GO:0022627">
    <property type="term" value="C:cytosolic small ribosomal subunit"/>
    <property type="evidence" value="ECO:0000314"/>
    <property type="project" value="SGD"/>
</dbReference>
<dbReference type="GO" id="GO:0005840">
    <property type="term" value="C:ribosome"/>
    <property type="evidence" value="ECO:0000318"/>
    <property type="project" value="GO_Central"/>
</dbReference>
<dbReference type="GO" id="GO:0003735">
    <property type="term" value="F:structural constituent of ribosome"/>
    <property type="evidence" value="ECO:0000314"/>
    <property type="project" value="SGD"/>
</dbReference>
<dbReference type="GO" id="GO:0000462">
    <property type="term" value="P:maturation of SSU-rRNA from tricistronic rRNA transcript (SSU-rRNA, 5.8S rRNA, LSU-rRNA)"/>
    <property type="evidence" value="ECO:0000316"/>
    <property type="project" value="SGD"/>
</dbReference>
<dbReference type="GO" id="GO:0006450">
    <property type="term" value="P:regulation of translational fidelity"/>
    <property type="evidence" value="ECO:0000314"/>
    <property type="project" value="UniProtKB"/>
</dbReference>
<dbReference type="GO" id="GO:0006412">
    <property type="term" value="P:translation"/>
    <property type="evidence" value="ECO:0000318"/>
    <property type="project" value="GO_Central"/>
</dbReference>
<dbReference type="CDD" id="cd03367">
    <property type="entry name" value="Ribosomal_S23"/>
    <property type="match status" value="1"/>
</dbReference>
<dbReference type="FunFam" id="2.40.50.140:FF:000007">
    <property type="entry name" value="40S ribosomal protein S23"/>
    <property type="match status" value="1"/>
</dbReference>
<dbReference type="Gene3D" id="2.40.50.140">
    <property type="entry name" value="Nucleic acid-binding proteins"/>
    <property type="match status" value="1"/>
</dbReference>
<dbReference type="InterPro" id="IPR012340">
    <property type="entry name" value="NA-bd_OB-fold"/>
</dbReference>
<dbReference type="InterPro" id="IPR006032">
    <property type="entry name" value="Ribosomal_uS12"/>
</dbReference>
<dbReference type="InterPro" id="IPR005680">
    <property type="entry name" value="Ribosomal_uS12_euk/arc"/>
</dbReference>
<dbReference type="NCBIfam" id="NF003254">
    <property type="entry name" value="PRK04211.1"/>
    <property type="match status" value="1"/>
</dbReference>
<dbReference type="NCBIfam" id="TIGR00982">
    <property type="entry name" value="uS12_E_A"/>
    <property type="match status" value="1"/>
</dbReference>
<dbReference type="PANTHER" id="PTHR11652">
    <property type="entry name" value="30S RIBOSOMAL PROTEIN S12 FAMILY MEMBER"/>
    <property type="match status" value="1"/>
</dbReference>
<dbReference type="Pfam" id="PF00164">
    <property type="entry name" value="Ribosom_S12_S23"/>
    <property type="match status" value="1"/>
</dbReference>
<dbReference type="PIRSF" id="PIRSF002133">
    <property type="entry name" value="Ribosomal_S12/S23"/>
    <property type="match status" value="1"/>
</dbReference>
<dbReference type="SUPFAM" id="SSF50249">
    <property type="entry name" value="Nucleic acid-binding proteins"/>
    <property type="match status" value="1"/>
</dbReference>
<dbReference type="PROSITE" id="PS00055">
    <property type="entry name" value="RIBOSOMAL_S12"/>
    <property type="match status" value="1"/>
</dbReference>
<protein>
    <recommendedName>
        <fullName evidence="5">Small ribosomal subunit protein uS12B</fullName>
    </recommendedName>
    <alternativeName>
        <fullName evidence="6">40S ribosomal protein S23-B</fullName>
    </alternativeName>
    <alternativeName>
        <fullName>RP37</fullName>
    </alternativeName>
    <alternativeName>
        <fullName>S28</fullName>
    </alternativeName>
    <alternativeName>
        <fullName>YS14</fullName>
    </alternativeName>
</protein>
<accession>P0CX30</accession>
<accession>D6VUP9</accession>
<accession>P32827</accession>
<keyword id="KW-0963">Cytoplasm</keyword>
<keyword id="KW-0379">Hydroxylation</keyword>
<keyword id="KW-1017">Isopeptide bond</keyword>
<keyword id="KW-1185">Reference proteome</keyword>
<keyword id="KW-0687">Ribonucleoprotein</keyword>
<keyword id="KW-0689">Ribosomal protein</keyword>
<keyword id="KW-0832">Ubl conjugation</keyword>
<organism>
    <name type="scientific">Saccharomyces cerevisiae (strain ATCC 204508 / S288c)</name>
    <name type="common">Baker's yeast</name>
    <dbReference type="NCBI Taxonomy" id="559292"/>
    <lineage>
        <taxon>Eukaryota</taxon>
        <taxon>Fungi</taxon>
        <taxon>Dikarya</taxon>
        <taxon>Ascomycota</taxon>
        <taxon>Saccharomycotina</taxon>
        <taxon>Saccharomycetes</taxon>
        <taxon>Saccharomycetales</taxon>
        <taxon>Saccharomycetaceae</taxon>
        <taxon>Saccharomyces</taxon>
    </lineage>
</organism>
<gene>
    <name evidence="6" type="primary">RPS23B</name>
    <name type="synonym">RPS28B</name>
    <name type="ordered locus">YPR132W</name>
    <name type="ORF">P9659.9</name>
</gene>
<evidence type="ECO:0000269" key="1">
    <source>
    </source>
</evidence>
<evidence type="ECO:0000269" key="2">
    <source>
    </source>
</evidence>
<evidence type="ECO:0000269" key="3">
    <source>
    </source>
</evidence>
<evidence type="ECO:0000269" key="4">
    <source>
    </source>
</evidence>
<evidence type="ECO:0000303" key="5">
    <source>
    </source>
</evidence>
<evidence type="ECO:0000303" key="6">
    <source>
    </source>
</evidence>
<evidence type="ECO:0000305" key="7"/>
<evidence type="ECO:0000305" key="8">
    <source>
    </source>
</evidence>
<evidence type="ECO:0000305" key="9">
    <source>
    </source>
</evidence>
<evidence type="ECO:0007744" key="10">
    <source>
    </source>
</evidence>
<feature type="chain" id="PRO_0000409761" description="Small ribosomal subunit protein uS12B">
    <location>
        <begin position="1"/>
        <end position="145"/>
    </location>
</feature>
<feature type="modified residue" description="3,4-dihydroxyproline" evidence="4">
    <location>
        <position position="64"/>
    </location>
</feature>
<feature type="cross-link" description="Glycyl lysine isopeptide (Lys-Gly) (interchain with G-Cter in ubiquitin)" evidence="10">
    <location>
        <position position="56"/>
    </location>
</feature>
<feature type="mutagenesis site" description="Lethal mutation." evidence="4">
    <original>P</original>
    <variation>A</variation>
    <location>
        <position position="64"/>
    </location>
</feature>
<feature type="mutagenesis site" description="Lethal mutation." evidence="4">
    <original>N</original>
    <variation>A</variation>
    <location>
        <position position="65"/>
    </location>
</feature>
<proteinExistence type="evidence at protein level"/>
<name>RS23B_YEAST</name>
<comment type="function">
    <text evidence="8">Component of the ribosome, a large ribonucleoprotein complex responsible for the synthesis of proteins in the cell. The small ribosomal subunit (SSU) binds messenger RNAs (mRNAs) and translates the encoded message by selecting cognate aminoacyl-transfer RNA (tRNA) molecules. The large subunit (LSU) contains the ribosomal catalytic site termed the peptidyl transferase center (PTC), which catalyzes the formation of peptide bonds, thereby polymerizing the amino acids delivered by tRNAs into a polypeptide chain. The nascent polypeptides leave the ribosome through a tunnel in the LSU and interact with protein factors that function in enzymatic processing, targeting, and the membrane insertion of nascent chains at the exit of the ribosomal tunnel.</text>
</comment>
<comment type="subunit">
    <text evidence="3 9">Component of the small ribosomal subunit (SSU). Mature yeast ribosomes consist of a small (40S) and a large (60S) subunit. The 40S small subunit contains 1 molecule of ribosomal RNA (18S rRNA) and 33 different proteins (encoded by 57 genes). The large 60S subunit contains 3 rRNA molecules (25S, 5.8S and 5S rRNA) and 46 different proteins (encoded by 81 genes) (PubMed:22096102, PubMed:9559554).</text>
</comment>
<comment type="subcellular location">
    <subcellularLocation>
        <location evidence="1 3">Cytoplasm</location>
    </subcellularLocation>
</comment>
<comment type="PTM">
    <text evidence="4">Hydroxylation at Pro-64 affects translation termination efficiency. The stereochemistry of the 3,4-dihydroxyproline has not yet been determined.</text>
</comment>
<comment type="miscellaneous">
    <text evidence="2">Present with 3340 molecules/cell in log phase SD medium.</text>
</comment>
<comment type="miscellaneous">
    <text evidence="7">There are 2 genes for uS12 in yeast.</text>
</comment>
<comment type="similarity">
    <text evidence="7">Belongs to the universal ribosomal protein uS12 family.</text>
</comment>
<reference key="1">
    <citation type="journal article" date="1993" name="J. Biol. Chem.">
        <title>A novel cloning strategy reveals the gene for the yeast homologue to Escherichia coli ribosomal protein S12.</title>
        <authorList>
            <person name="Alksne L.E."/>
            <person name="Warner J.R."/>
        </authorList>
    </citation>
    <scope>NUCLEOTIDE SEQUENCE [GENOMIC DNA]</scope>
</reference>
<reference key="2">
    <citation type="journal article" date="1997" name="Nature">
        <title>The nucleotide sequence of Saccharomyces cerevisiae chromosome XVI.</title>
        <authorList>
            <person name="Bussey H."/>
            <person name="Storms R.K."/>
            <person name="Ahmed A."/>
            <person name="Albermann K."/>
            <person name="Allen E."/>
            <person name="Ansorge W."/>
            <person name="Araujo R."/>
            <person name="Aparicio A."/>
            <person name="Barrell B.G."/>
            <person name="Badcock K."/>
            <person name="Benes V."/>
            <person name="Botstein D."/>
            <person name="Bowman S."/>
            <person name="Brueckner M."/>
            <person name="Carpenter J."/>
            <person name="Cherry J.M."/>
            <person name="Chung E."/>
            <person name="Churcher C.M."/>
            <person name="Coster F."/>
            <person name="Davis K."/>
            <person name="Davis R.W."/>
            <person name="Dietrich F.S."/>
            <person name="Delius H."/>
            <person name="DiPaolo T."/>
            <person name="Dubois E."/>
            <person name="Duesterhoeft A."/>
            <person name="Duncan M."/>
            <person name="Floeth M."/>
            <person name="Fortin N."/>
            <person name="Friesen J.D."/>
            <person name="Fritz C."/>
            <person name="Goffeau A."/>
            <person name="Hall J."/>
            <person name="Hebling U."/>
            <person name="Heumann K."/>
            <person name="Hilbert H."/>
            <person name="Hillier L.W."/>
            <person name="Hunicke-Smith S."/>
            <person name="Hyman R.W."/>
            <person name="Johnston M."/>
            <person name="Kalman S."/>
            <person name="Kleine K."/>
            <person name="Komp C."/>
            <person name="Kurdi O."/>
            <person name="Lashkari D."/>
            <person name="Lew H."/>
            <person name="Lin A."/>
            <person name="Lin D."/>
            <person name="Louis E.J."/>
            <person name="Marathe R."/>
            <person name="Messenguy F."/>
            <person name="Mewes H.-W."/>
            <person name="Mirtipati S."/>
            <person name="Moestl D."/>
            <person name="Mueller-Auer S."/>
            <person name="Namath A."/>
            <person name="Nentwich U."/>
            <person name="Oefner P."/>
            <person name="Pearson D."/>
            <person name="Petel F.X."/>
            <person name="Pohl T.M."/>
            <person name="Purnelle B."/>
            <person name="Rajandream M.A."/>
            <person name="Rechmann S."/>
            <person name="Rieger M."/>
            <person name="Riles L."/>
            <person name="Roberts D."/>
            <person name="Schaefer M."/>
            <person name="Scharfe M."/>
            <person name="Scherens B."/>
            <person name="Schramm S."/>
            <person name="Schroeder M."/>
            <person name="Sdicu A.-M."/>
            <person name="Tettelin H."/>
            <person name="Urrestarazu L.A."/>
            <person name="Ushinsky S."/>
            <person name="Vierendeels F."/>
            <person name="Vissers S."/>
            <person name="Voss H."/>
            <person name="Walsh S.V."/>
            <person name="Wambutt R."/>
            <person name="Wang Y."/>
            <person name="Wedler E."/>
            <person name="Wedler H."/>
            <person name="Winnett E."/>
            <person name="Zhong W.-W."/>
            <person name="Zollner A."/>
            <person name="Vo D.H."/>
            <person name="Hani J."/>
        </authorList>
    </citation>
    <scope>NUCLEOTIDE SEQUENCE [LARGE SCALE GENOMIC DNA]</scope>
    <source>
        <strain>ATCC 204508 / S288c</strain>
    </source>
</reference>
<reference key="3">
    <citation type="journal article" date="2014" name="G3 (Bethesda)">
        <title>The reference genome sequence of Saccharomyces cerevisiae: Then and now.</title>
        <authorList>
            <person name="Engel S.R."/>
            <person name="Dietrich F.S."/>
            <person name="Fisk D.G."/>
            <person name="Binkley G."/>
            <person name="Balakrishnan R."/>
            <person name="Costanzo M.C."/>
            <person name="Dwight S.S."/>
            <person name="Hitz B.C."/>
            <person name="Karra K."/>
            <person name="Nash R.S."/>
            <person name="Weng S."/>
            <person name="Wong E.D."/>
            <person name="Lloyd P."/>
            <person name="Skrzypek M.S."/>
            <person name="Miyasato S.R."/>
            <person name="Simison M."/>
            <person name="Cherry J.M."/>
        </authorList>
    </citation>
    <scope>GENOME REANNOTATION</scope>
    <source>
        <strain>ATCC 204508 / S288c</strain>
    </source>
</reference>
<reference key="4">
    <citation type="journal article" date="1998" name="Yeast">
        <title>The list of cytoplasmic ribosomal proteins of Saccharomyces cerevisiae.</title>
        <authorList>
            <person name="Planta R.J."/>
            <person name="Mager W.H."/>
        </authorList>
    </citation>
    <scope>NOMENCLATURE</scope>
    <scope>SUBUNIT</scope>
</reference>
<reference key="5">
    <citation type="journal article" date="2003" name="Nature">
        <title>Global analysis of protein localization in budding yeast.</title>
        <authorList>
            <person name="Huh W.-K."/>
            <person name="Falvo J.V."/>
            <person name="Gerke L.C."/>
            <person name="Carroll A.S."/>
            <person name="Howson R.W."/>
            <person name="Weissman J.S."/>
            <person name="O'Shea E.K."/>
        </authorList>
    </citation>
    <scope>SUBCELLULAR LOCATION [LARGE SCALE ANALYSIS]</scope>
</reference>
<reference key="6">
    <citation type="journal article" date="2003" name="Nature">
        <title>Global analysis of protein expression in yeast.</title>
        <authorList>
            <person name="Ghaemmaghami S."/>
            <person name="Huh W.-K."/>
            <person name="Bower K."/>
            <person name="Howson R.W."/>
            <person name="Belle A."/>
            <person name="Dephoure N."/>
            <person name="O'Shea E.K."/>
            <person name="Weissman J.S."/>
        </authorList>
    </citation>
    <scope>LEVEL OF PROTEIN EXPRESSION [LARGE SCALE ANALYSIS]</scope>
</reference>
<reference key="7">
    <citation type="journal article" date="2011" name="Science">
        <title>The structure of the eukaryotic ribosome at 3.0 A resolution.</title>
        <authorList>
            <person name="Ben-Shem A."/>
            <person name="Garreau de Loubresse N."/>
            <person name="Melnikov S."/>
            <person name="Jenner L."/>
            <person name="Yusupova G."/>
            <person name="Yusupov M."/>
        </authorList>
    </citation>
    <scope>SUBUNIT</scope>
    <scope>SUBCELLULAR LOCATION</scope>
</reference>
<reference key="8">
    <citation type="journal article" date="2012" name="Proteomics">
        <title>Sites of ubiquitin attachment in Saccharomyces cerevisiae.</title>
        <authorList>
            <person name="Starita L.M."/>
            <person name="Lo R.S."/>
            <person name="Eng J.K."/>
            <person name="von Haller P.D."/>
            <person name="Fields S."/>
        </authorList>
    </citation>
    <scope>UBIQUITINATION [LARGE SCALE ANALYSIS] AT LYS-56</scope>
    <scope>IDENTIFICATION BY MASS SPECTROMETRY [LARGE SCALE ANALYSIS]</scope>
</reference>
<reference key="9">
    <citation type="journal article" date="2014" name="Curr. Opin. Struct. Biol.">
        <title>A new system for naming ribosomal proteins.</title>
        <authorList>
            <person name="Ban N."/>
            <person name="Beckmann R."/>
            <person name="Cate J.H.D."/>
            <person name="Dinman J.D."/>
            <person name="Dragon F."/>
            <person name="Ellis S.R."/>
            <person name="Lafontaine D.L.J."/>
            <person name="Lindahl L."/>
            <person name="Liljas A."/>
            <person name="Lipton J.M."/>
            <person name="McAlear M.A."/>
            <person name="Moore P.B."/>
            <person name="Noller H.F."/>
            <person name="Ortega J."/>
            <person name="Panse V.G."/>
            <person name="Ramakrishnan V."/>
            <person name="Spahn C.M.T."/>
            <person name="Steitz T.A."/>
            <person name="Tchorzewski M."/>
            <person name="Tollervey D."/>
            <person name="Warren A.J."/>
            <person name="Williamson J.R."/>
            <person name="Wilson D."/>
            <person name="Yonath A."/>
            <person name="Yusupov M."/>
        </authorList>
    </citation>
    <scope>NOMENCLATURE</scope>
</reference>
<reference key="10">
    <citation type="journal article" date="2014" name="Proc. Natl. Acad. Sci. U.S.A.">
        <title>Hydroxylation of the eukaryotic ribosomal decoding center affects translational accuracy.</title>
        <authorList>
            <person name="Loenarz C."/>
            <person name="Sekirnik R."/>
            <person name="Thalhammer A."/>
            <person name="Ge W."/>
            <person name="Spivakovsky E."/>
            <person name="Mackeen M.M."/>
            <person name="McDonough M.A."/>
            <person name="Cockman M.E."/>
            <person name="Kessler B.M."/>
            <person name="Ratcliffe P.J."/>
            <person name="Wolf A."/>
            <person name="Schofield C.J."/>
        </authorList>
    </citation>
    <scope>HYDROXYLATION AT PRO-64</scope>
    <scope>MUTAGENESIS OF PRO-64 AND ASN-65</scope>
</reference>
<sequence length="145" mass="16038">MGKGKPRGLNSARKLRVHRRNNRWAENNYKKRLLGTAFKSSPFGGSSHAKGIVLEKLGIESKQPNSAIRKCVRVQLIKNGKKVTAFVPNDGCLNFVDENDEVLLAGFGRKGKAKGDIPGVRFKVVKVSGVSLLALWKEKKEKPRS</sequence>